<proteinExistence type="evidence at transcript level"/>
<gene>
    <name type="primary">Olig3</name>
    <name type="synonym">Bhlhb7</name>
</gene>
<accession>Q6PFG8</accession>
<accession>Q9EQW5</accession>
<evidence type="ECO:0000255" key="1"/>
<evidence type="ECO:0000255" key="2">
    <source>
        <dbReference type="PROSITE-ProRule" id="PRU00981"/>
    </source>
</evidence>
<evidence type="ECO:0000256" key="3">
    <source>
        <dbReference type="SAM" id="MobiDB-lite"/>
    </source>
</evidence>
<evidence type="ECO:0000269" key="4">
    <source>
    </source>
</evidence>
<evidence type="ECO:0000269" key="5">
    <source>
    </source>
</evidence>
<evidence type="ECO:0000269" key="6">
    <source>
    </source>
</evidence>
<evidence type="ECO:0000269" key="7">
    <source>
    </source>
</evidence>
<evidence type="ECO:0000305" key="8"/>
<sequence>MNSDSSSVSSRASSPDMDEMYLRDHHHRHHHHHQESRLNSVSSTQGDMVQKMPGESLSRAGAKAAGESSKYKIKKQLSEQDLQQLRLKINGRERKRMHDLNLAMDGLREVMPYAHGPSVRKLSKIATLLLARNYILMLTSSLEEMKRLVGEIYGGHHSAFHCGTVGHSAGHPAHAANAVHPVHPILGGALSSGNASSPLSATSLPTIGTIRPPHSLLKAPSTPPALQLGSGFQHWAGLPCPCTICQMPPPPHLSALSTANMARLSAESKDLLK</sequence>
<keyword id="KW-0175">Coiled coil</keyword>
<keyword id="KW-0238">DNA-binding</keyword>
<keyword id="KW-0539">Nucleus</keyword>
<keyword id="KW-1185">Reference proteome</keyword>
<keyword id="KW-0804">Transcription</keyword>
<keyword id="KW-0805">Transcription regulation</keyword>
<protein>
    <recommendedName>
        <fullName>Oligodendrocyte transcription factor 3</fullName>
        <shortName>Oligo3</shortName>
    </recommendedName>
    <alternativeName>
        <fullName>Class B basic helix-loop-helix protein 7</fullName>
        <shortName>bHLHb7</shortName>
    </alternativeName>
    <alternativeName>
        <fullName>Oligodendrocyte-specific bHLH transcription factor 3</fullName>
    </alternativeName>
</protein>
<reference key="1">
    <citation type="journal article" date="2000" name="Mech. Dev.">
        <title>Dynamic expression of basic helix-loop-helix Olig family members: implication of Olig2 in neuron and oligodendrocyte differentiation and identification of a new member, Olig3.</title>
        <authorList>
            <person name="Takebayashi H."/>
            <person name="Yoshida S."/>
            <person name="Sugimori M."/>
            <person name="Kosako H."/>
            <person name="Kominami R."/>
            <person name="Nakafuku M."/>
            <person name="Nabeshima Y."/>
        </authorList>
    </citation>
    <scope>NUCLEOTIDE SEQUENCE [MRNA]</scope>
    <scope>SUBCELLULAR LOCATION</scope>
    <source>
        <strain>Swiss Webster</strain>
        <tissue>Embryo</tissue>
    </source>
</reference>
<reference key="2">
    <citation type="journal article" date="2004" name="Genome Res.">
        <title>The status, quality, and expansion of the NIH full-length cDNA project: the Mammalian Gene Collection (MGC).</title>
        <authorList>
            <consortium name="The MGC Project Team"/>
        </authorList>
    </citation>
    <scope>NUCLEOTIDE SEQUENCE [LARGE SCALE MRNA]</scope>
    <scope>TISSUE SPECIFICITY</scope>
    <source>
        <strain>C57BL/6J</strain>
        <tissue>Brain</tissue>
    </source>
</reference>
<reference key="3">
    <citation type="journal article" date="2002" name="Mech. Dev.">
        <title>Non-overlapping expression of Olig3 and Olig2 in the embryonic neural tube.</title>
        <authorList>
            <person name="Takebayashi H."/>
            <person name="Ohtsuki T."/>
            <person name="Uchida T."/>
            <person name="Kawamoto S."/>
            <person name="Okubo K."/>
            <person name="Ikenaka K."/>
            <person name="Takeichi M."/>
            <person name="Chisaka O."/>
            <person name="Nabeshima Y."/>
        </authorList>
    </citation>
    <scope>DEVELOPMENTAL STAGE</scope>
    <scope>SUBCELLULAR LOCATION</scope>
</reference>
<reference key="4">
    <citation type="journal article" date="2005" name="Genes Dev.">
        <title>The bHLH factor Olig3 coordinates the specification of dorsal neurons in the spinal cord.</title>
        <authorList>
            <person name="Mueller T."/>
            <person name="Anlag K."/>
            <person name="Wildner H."/>
            <person name="Britsch S."/>
            <person name="Treier M."/>
            <person name="Birchmeier C."/>
        </authorList>
    </citation>
    <scope>FUNCTION</scope>
    <scope>DEVELOPMENTAL STAGE</scope>
</reference>
<organism>
    <name type="scientific">Mus musculus</name>
    <name type="common">Mouse</name>
    <dbReference type="NCBI Taxonomy" id="10090"/>
    <lineage>
        <taxon>Eukaryota</taxon>
        <taxon>Metazoa</taxon>
        <taxon>Chordata</taxon>
        <taxon>Craniata</taxon>
        <taxon>Vertebrata</taxon>
        <taxon>Euteleostomi</taxon>
        <taxon>Mammalia</taxon>
        <taxon>Eutheria</taxon>
        <taxon>Euarchontoglires</taxon>
        <taxon>Glires</taxon>
        <taxon>Rodentia</taxon>
        <taxon>Myomorpha</taxon>
        <taxon>Muroidea</taxon>
        <taxon>Muridae</taxon>
        <taxon>Murinae</taxon>
        <taxon>Mus</taxon>
        <taxon>Mus</taxon>
    </lineage>
</organism>
<dbReference type="EMBL" id="AB038698">
    <property type="protein sequence ID" value="BAB18908.1"/>
    <property type="status" value="ALT_INIT"/>
    <property type="molecule type" value="mRNA"/>
</dbReference>
<dbReference type="EMBL" id="BC057564">
    <property type="protein sequence ID" value="AAH57564.1"/>
    <property type="molecule type" value="mRNA"/>
</dbReference>
<dbReference type="CCDS" id="CCDS35855.1"/>
<dbReference type="RefSeq" id="NP_443734.2">
    <property type="nucleotide sequence ID" value="NM_053008.3"/>
</dbReference>
<dbReference type="SMR" id="Q6PFG8"/>
<dbReference type="FunCoup" id="Q6PFG8">
    <property type="interactions" value="1277"/>
</dbReference>
<dbReference type="STRING" id="10090.ENSMUSP00000057106"/>
<dbReference type="PhosphoSitePlus" id="Q6PFG8"/>
<dbReference type="PaxDb" id="10090-ENSMUSP00000057106"/>
<dbReference type="ProteomicsDB" id="289986"/>
<dbReference type="Antibodypedia" id="19782">
    <property type="antibodies" value="193 antibodies from 30 providers"/>
</dbReference>
<dbReference type="DNASU" id="94222"/>
<dbReference type="Ensembl" id="ENSMUST00000053225.7">
    <property type="protein sequence ID" value="ENSMUSP00000057106.6"/>
    <property type="gene ID" value="ENSMUSG00000045591.7"/>
</dbReference>
<dbReference type="GeneID" id="94222"/>
<dbReference type="KEGG" id="mmu:94222"/>
<dbReference type="UCSC" id="uc007ene.1">
    <property type="organism name" value="mouse"/>
</dbReference>
<dbReference type="AGR" id="MGI:2149955"/>
<dbReference type="CTD" id="167826"/>
<dbReference type="MGI" id="MGI:2149955">
    <property type="gene designation" value="Olig3"/>
</dbReference>
<dbReference type="VEuPathDB" id="HostDB:ENSMUSG00000045591"/>
<dbReference type="eggNOG" id="KOG3898">
    <property type="taxonomic scope" value="Eukaryota"/>
</dbReference>
<dbReference type="GeneTree" id="ENSGT00940000160850"/>
<dbReference type="HOGENOM" id="CLU_065376_1_0_1"/>
<dbReference type="InParanoid" id="Q6PFG8"/>
<dbReference type="OMA" id="SICQVPP"/>
<dbReference type="OrthoDB" id="10011855at2759"/>
<dbReference type="PhylomeDB" id="Q6PFG8"/>
<dbReference type="TreeFam" id="TF322733"/>
<dbReference type="BioGRID-ORCS" id="94222">
    <property type="hits" value="2 hits in 77 CRISPR screens"/>
</dbReference>
<dbReference type="PRO" id="PR:Q6PFG8"/>
<dbReference type="Proteomes" id="UP000000589">
    <property type="component" value="Chromosome 10"/>
</dbReference>
<dbReference type="RNAct" id="Q6PFG8">
    <property type="molecule type" value="protein"/>
</dbReference>
<dbReference type="Bgee" id="ENSMUSG00000045591">
    <property type="expression patterns" value="Expressed in ureteric bud trunk and 41 other cell types or tissues"/>
</dbReference>
<dbReference type="GO" id="GO:0005634">
    <property type="term" value="C:nucleus"/>
    <property type="evidence" value="ECO:0007669"/>
    <property type="project" value="UniProtKB-SubCell"/>
</dbReference>
<dbReference type="GO" id="GO:0046983">
    <property type="term" value="F:protein dimerization activity"/>
    <property type="evidence" value="ECO:0007669"/>
    <property type="project" value="InterPro"/>
</dbReference>
<dbReference type="GO" id="GO:1990837">
    <property type="term" value="F:sequence-specific double-stranded DNA binding"/>
    <property type="evidence" value="ECO:0007669"/>
    <property type="project" value="Ensembl"/>
</dbReference>
<dbReference type="GO" id="GO:0000122">
    <property type="term" value="P:negative regulation of transcription by RNA polymerase II"/>
    <property type="evidence" value="ECO:0000314"/>
    <property type="project" value="MGI"/>
</dbReference>
<dbReference type="GO" id="GO:0010468">
    <property type="term" value="P:regulation of gene expression"/>
    <property type="evidence" value="ECO:0000315"/>
    <property type="project" value="MGI"/>
</dbReference>
<dbReference type="GO" id="GO:0021520">
    <property type="term" value="P:spinal cord motor neuron cell fate specification"/>
    <property type="evidence" value="ECO:0000315"/>
    <property type="project" value="MGI"/>
</dbReference>
<dbReference type="GO" id="GO:0021522">
    <property type="term" value="P:spinal cord motor neuron differentiation"/>
    <property type="evidence" value="ECO:0000315"/>
    <property type="project" value="MGI"/>
</dbReference>
<dbReference type="GO" id="GO:0097476">
    <property type="term" value="P:spinal cord motor neuron migration"/>
    <property type="evidence" value="ECO:0000315"/>
    <property type="project" value="MGI"/>
</dbReference>
<dbReference type="CDD" id="cd18941">
    <property type="entry name" value="bHLH_TS_OLIG3"/>
    <property type="match status" value="1"/>
</dbReference>
<dbReference type="FunFam" id="4.10.280.10:FF:000031">
    <property type="entry name" value="Oligodendrocyte transcription factor 3"/>
    <property type="match status" value="1"/>
</dbReference>
<dbReference type="Gene3D" id="4.10.280.10">
    <property type="entry name" value="Helix-loop-helix DNA-binding domain"/>
    <property type="match status" value="1"/>
</dbReference>
<dbReference type="InterPro" id="IPR011598">
    <property type="entry name" value="bHLH_dom"/>
</dbReference>
<dbReference type="InterPro" id="IPR050359">
    <property type="entry name" value="bHLH_transcription_factors"/>
</dbReference>
<dbReference type="InterPro" id="IPR036638">
    <property type="entry name" value="HLH_DNA-bd_sf"/>
</dbReference>
<dbReference type="InterPro" id="IPR032659">
    <property type="entry name" value="Olig3_bHLH"/>
</dbReference>
<dbReference type="PANTHER" id="PTHR19290">
    <property type="entry name" value="BASIC HELIX-LOOP-HELIX PROTEIN NEUROGENIN-RELATED"/>
    <property type="match status" value="1"/>
</dbReference>
<dbReference type="PANTHER" id="PTHR19290:SF96">
    <property type="entry name" value="OLIGODENDROCYTE TRANSCRIPTION FACTOR 3"/>
    <property type="match status" value="1"/>
</dbReference>
<dbReference type="Pfam" id="PF00010">
    <property type="entry name" value="HLH"/>
    <property type="match status" value="1"/>
</dbReference>
<dbReference type="SMART" id="SM00353">
    <property type="entry name" value="HLH"/>
    <property type="match status" value="1"/>
</dbReference>
<dbReference type="SUPFAM" id="SSF47459">
    <property type="entry name" value="HLH, helix-loop-helix DNA-binding domain"/>
    <property type="match status" value="1"/>
</dbReference>
<dbReference type="PROSITE" id="PS50888">
    <property type="entry name" value="BHLH"/>
    <property type="match status" value="1"/>
</dbReference>
<feature type="chain" id="PRO_0000127418" description="Oligodendrocyte transcription factor 3">
    <location>
        <begin position="1"/>
        <end position="273"/>
    </location>
</feature>
<feature type="domain" description="bHLH" evidence="2">
    <location>
        <begin position="84"/>
        <end position="138"/>
    </location>
</feature>
<feature type="region of interest" description="Disordered" evidence="3">
    <location>
        <begin position="1"/>
        <end position="72"/>
    </location>
</feature>
<feature type="coiled-coil region" evidence="1">
    <location>
        <begin position="69"/>
        <end position="90"/>
    </location>
</feature>
<feature type="compositionally biased region" description="Low complexity" evidence="3">
    <location>
        <begin position="1"/>
        <end position="14"/>
    </location>
</feature>
<feature type="compositionally biased region" description="Basic residues" evidence="3">
    <location>
        <begin position="24"/>
        <end position="34"/>
    </location>
</feature>
<feature type="compositionally biased region" description="Polar residues" evidence="3">
    <location>
        <begin position="37"/>
        <end position="47"/>
    </location>
</feature>
<name>OLIG3_MOUSE</name>
<comment type="function">
    <text evidence="7">May determine the distinct specification program of class A neurons in the dorsal part of the spinal cord and suppress specification of class B neurons.</text>
</comment>
<comment type="subcellular location">
    <subcellularLocation>
        <location evidence="2 4 5">Nucleus</location>
    </subcellularLocation>
</comment>
<comment type="tissue specificity">
    <text evidence="6">Weakly expressed, mainly in non-neural tissues.</text>
</comment>
<comment type="developmental stage">
    <text evidence="5 7">Restricted to the CNS. At 9.25 and 10.5 dpc, specifically expressed in the dorsal neural tube from the midbrain/hindbrain boundary to the spinal cord. At 10.5 dpc, expressed continuously from the upper rhombic lip to the tail. From 10.5 to 12.5 dpc, located in the most dorsal aspect of the spinal cord, excluding the roof plate, mainly in proliferating progenitor cells; quickly down-regulated in postmitotic neurons. At 11.5 dpc, 3 ventral expression clusters, corresponding to p3, p2 and p0 domains, transiently appear on the lateral margin of the subventricular zone, in addition to dorsal expression. At 14.5 dpc, weakly expressed in cells scattered in the mantle zone. Expression declines after 15.5 dpc. In the 11.5 dpc forebrain, expressed in the ventricular zone of the dorsal thalamus. In the 11.5 to 14.5 dpc hindbrain, dorsally expressed in the upper and lower rhombic lip, in the cerebellar neuroepithelium.</text>
</comment>
<comment type="sequence caution" evidence="8">
    <conflict type="erroneous initiation">
        <sequence resource="EMBL-CDS" id="BAB18908"/>
    </conflict>
</comment>